<gene>
    <name evidence="1" type="primary">clpP</name>
    <name type="ordered locus">WS2210</name>
</gene>
<feature type="chain" id="PRO_0000179717" description="ATP-dependent Clp protease proteolytic subunit">
    <location>
        <begin position="1"/>
        <end position="195"/>
    </location>
</feature>
<feature type="active site" description="Nucleophile" evidence="1">
    <location>
        <position position="98"/>
    </location>
</feature>
<feature type="active site" evidence="1">
    <location>
        <position position="123"/>
    </location>
</feature>
<organism>
    <name type="scientific">Wolinella succinogenes (strain ATCC 29543 / DSM 1740 / CCUG 13145 / JCM 31913 / LMG 7466 / NCTC 11488 / FDC 602W)</name>
    <name type="common">Vibrio succinogenes</name>
    <dbReference type="NCBI Taxonomy" id="273121"/>
    <lineage>
        <taxon>Bacteria</taxon>
        <taxon>Pseudomonadati</taxon>
        <taxon>Campylobacterota</taxon>
        <taxon>Epsilonproteobacteria</taxon>
        <taxon>Campylobacterales</taxon>
        <taxon>Helicobacteraceae</taxon>
        <taxon>Wolinella</taxon>
    </lineage>
</organism>
<evidence type="ECO:0000255" key="1">
    <source>
        <dbReference type="HAMAP-Rule" id="MF_00444"/>
    </source>
</evidence>
<accession>Q7M7M3</accession>
<dbReference type="EC" id="3.4.21.92" evidence="1"/>
<dbReference type="EMBL" id="BX571663">
    <property type="protein sequence ID" value="CAE11199.1"/>
    <property type="molecule type" value="Genomic_DNA"/>
</dbReference>
<dbReference type="RefSeq" id="WP_011139981.1">
    <property type="nucleotide sequence ID" value="NC_005090.1"/>
</dbReference>
<dbReference type="SMR" id="Q7M7M3"/>
<dbReference type="STRING" id="273121.WS2210"/>
<dbReference type="MEROPS" id="S14.001"/>
<dbReference type="KEGG" id="wsu:WS2210"/>
<dbReference type="eggNOG" id="COG0740">
    <property type="taxonomic scope" value="Bacteria"/>
</dbReference>
<dbReference type="HOGENOM" id="CLU_058707_3_2_7"/>
<dbReference type="Proteomes" id="UP000000422">
    <property type="component" value="Chromosome"/>
</dbReference>
<dbReference type="GO" id="GO:0005737">
    <property type="term" value="C:cytoplasm"/>
    <property type="evidence" value="ECO:0007669"/>
    <property type="project" value="UniProtKB-SubCell"/>
</dbReference>
<dbReference type="GO" id="GO:0009368">
    <property type="term" value="C:endopeptidase Clp complex"/>
    <property type="evidence" value="ECO:0007669"/>
    <property type="project" value="TreeGrafter"/>
</dbReference>
<dbReference type="GO" id="GO:0004176">
    <property type="term" value="F:ATP-dependent peptidase activity"/>
    <property type="evidence" value="ECO:0007669"/>
    <property type="project" value="InterPro"/>
</dbReference>
<dbReference type="GO" id="GO:0051117">
    <property type="term" value="F:ATPase binding"/>
    <property type="evidence" value="ECO:0007669"/>
    <property type="project" value="TreeGrafter"/>
</dbReference>
<dbReference type="GO" id="GO:0004252">
    <property type="term" value="F:serine-type endopeptidase activity"/>
    <property type="evidence" value="ECO:0007669"/>
    <property type="project" value="UniProtKB-UniRule"/>
</dbReference>
<dbReference type="GO" id="GO:0006515">
    <property type="term" value="P:protein quality control for misfolded or incompletely synthesized proteins"/>
    <property type="evidence" value="ECO:0007669"/>
    <property type="project" value="TreeGrafter"/>
</dbReference>
<dbReference type="CDD" id="cd07017">
    <property type="entry name" value="S14_ClpP_2"/>
    <property type="match status" value="1"/>
</dbReference>
<dbReference type="FunFam" id="3.90.226.10:FF:000001">
    <property type="entry name" value="ATP-dependent Clp protease proteolytic subunit"/>
    <property type="match status" value="1"/>
</dbReference>
<dbReference type="Gene3D" id="3.90.226.10">
    <property type="entry name" value="2-enoyl-CoA Hydratase, Chain A, domain 1"/>
    <property type="match status" value="1"/>
</dbReference>
<dbReference type="HAMAP" id="MF_00444">
    <property type="entry name" value="ClpP"/>
    <property type="match status" value="1"/>
</dbReference>
<dbReference type="InterPro" id="IPR001907">
    <property type="entry name" value="ClpP"/>
</dbReference>
<dbReference type="InterPro" id="IPR029045">
    <property type="entry name" value="ClpP/crotonase-like_dom_sf"/>
</dbReference>
<dbReference type="InterPro" id="IPR023562">
    <property type="entry name" value="ClpP/TepA"/>
</dbReference>
<dbReference type="InterPro" id="IPR033135">
    <property type="entry name" value="ClpP_His_AS"/>
</dbReference>
<dbReference type="InterPro" id="IPR018215">
    <property type="entry name" value="ClpP_Ser_AS"/>
</dbReference>
<dbReference type="NCBIfam" id="TIGR00493">
    <property type="entry name" value="clpP"/>
    <property type="match status" value="1"/>
</dbReference>
<dbReference type="NCBIfam" id="NF001368">
    <property type="entry name" value="PRK00277.1"/>
    <property type="match status" value="1"/>
</dbReference>
<dbReference type="NCBIfam" id="NF009205">
    <property type="entry name" value="PRK12553.1"/>
    <property type="match status" value="1"/>
</dbReference>
<dbReference type="PANTHER" id="PTHR10381">
    <property type="entry name" value="ATP-DEPENDENT CLP PROTEASE PROTEOLYTIC SUBUNIT"/>
    <property type="match status" value="1"/>
</dbReference>
<dbReference type="PANTHER" id="PTHR10381:SF70">
    <property type="entry name" value="ATP-DEPENDENT CLP PROTEASE PROTEOLYTIC SUBUNIT"/>
    <property type="match status" value="1"/>
</dbReference>
<dbReference type="Pfam" id="PF00574">
    <property type="entry name" value="CLP_protease"/>
    <property type="match status" value="1"/>
</dbReference>
<dbReference type="PRINTS" id="PR00127">
    <property type="entry name" value="CLPPROTEASEP"/>
</dbReference>
<dbReference type="SUPFAM" id="SSF52096">
    <property type="entry name" value="ClpP/crotonase"/>
    <property type="match status" value="1"/>
</dbReference>
<dbReference type="PROSITE" id="PS00382">
    <property type="entry name" value="CLP_PROTEASE_HIS"/>
    <property type="match status" value="1"/>
</dbReference>
<dbReference type="PROSITE" id="PS00381">
    <property type="entry name" value="CLP_PROTEASE_SER"/>
    <property type="match status" value="1"/>
</dbReference>
<protein>
    <recommendedName>
        <fullName evidence="1">ATP-dependent Clp protease proteolytic subunit</fullName>
        <ecNumber evidence="1">3.4.21.92</ecNumber>
    </recommendedName>
    <alternativeName>
        <fullName evidence="1">Endopeptidase Clp</fullName>
    </alternativeName>
</protein>
<name>CLPP_WOLSU</name>
<proteinExistence type="inferred from homology"/>
<comment type="function">
    <text evidence="1">Cleaves peptides in various proteins in a process that requires ATP hydrolysis. Has a chymotrypsin-like activity. Plays a major role in the degradation of misfolded proteins.</text>
</comment>
<comment type="catalytic activity">
    <reaction evidence="1">
        <text>Hydrolysis of proteins to small peptides in the presence of ATP and magnesium. alpha-casein is the usual test substrate. In the absence of ATP, only oligopeptides shorter than five residues are hydrolyzed (such as succinyl-Leu-Tyr-|-NHMec, and Leu-Tyr-Leu-|-Tyr-Trp, in which cleavage of the -Tyr-|-Leu- and -Tyr-|-Trp bonds also occurs).</text>
        <dbReference type="EC" id="3.4.21.92"/>
    </reaction>
</comment>
<comment type="subunit">
    <text evidence="1">Fourteen ClpP subunits assemble into 2 heptameric rings which stack back to back to give a disk-like structure with a central cavity, resembling the structure of eukaryotic proteasomes.</text>
</comment>
<comment type="subcellular location">
    <subcellularLocation>
        <location evidence="1">Cytoplasm</location>
    </subcellularLocation>
</comment>
<comment type="similarity">
    <text evidence="1">Belongs to the peptidase S14 family.</text>
</comment>
<sequence length="195" mass="21579">MNYIPYVIEKTGRGERSYDIYSRLLKDRIIMLSGEINDGVASSIVSQMLFLEAEDPEKDIYLYINSPGGVITSGMSIYDTMNYVKPDICTICIGQAASMGAFLLSCGTKGKRFSLPNSRIMIHQPLGGAQGQATDIEIQAKEILRLKSILNGILASNTGQPLEKIAKDTDRDFFMSAQESKEYGLIDNVLEKSFK</sequence>
<keyword id="KW-0963">Cytoplasm</keyword>
<keyword id="KW-0378">Hydrolase</keyword>
<keyword id="KW-0645">Protease</keyword>
<keyword id="KW-1185">Reference proteome</keyword>
<keyword id="KW-0720">Serine protease</keyword>
<reference key="1">
    <citation type="journal article" date="2003" name="Proc. Natl. Acad. Sci. U.S.A.">
        <title>Complete genome sequence and analysis of Wolinella succinogenes.</title>
        <authorList>
            <person name="Baar C."/>
            <person name="Eppinger M."/>
            <person name="Raddatz G."/>
            <person name="Simon J."/>
            <person name="Lanz C."/>
            <person name="Klimmek O."/>
            <person name="Nandakumar R."/>
            <person name="Gross R."/>
            <person name="Rosinus A."/>
            <person name="Keller H."/>
            <person name="Jagtap P."/>
            <person name="Linke B."/>
            <person name="Meyer F."/>
            <person name="Lederer H."/>
            <person name="Schuster S.C."/>
        </authorList>
    </citation>
    <scope>NUCLEOTIDE SEQUENCE [LARGE SCALE GENOMIC DNA]</scope>
    <source>
        <strain>ATCC 29543 / DSM 1740 / CCUG 13145 / JCM 31913 / LMG 7466 / NCTC 11488 / FDC 602W</strain>
    </source>
</reference>